<comment type="catalytic activity">
    <reaction evidence="1">
        <text>D-tagatofuranose 1,6-bisphosphate = D-glyceraldehyde 3-phosphate + dihydroxyacetone phosphate</text>
        <dbReference type="Rhea" id="RHEA:22948"/>
        <dbReference type="ChEBI" id="CHEBI:57642"/>
        <dbReference type="ChEBI" id="CHEBI:58694"/>
        <dbReference type="ChEBI" id="CHEBI:59776"/>
        <dbReference type="EC" id="4.1.2.40"/>
    </reaction>
</comment>
<comment type="pathway">
    <text evidence="1">Carbohydrate metabolism; D-tagatose 6-phosphate degradation; D-glyceraldehyde 3-phosphate and glycerone phosphate from D-tagatose 6-phosphate: step 2/2.</text>
</comment>
<comment type="similarity">
    <text evidence="1">Belongs to the aldolase LacD family.</text>
</comment>
<reference key="1">
    <citation type="journal article" date="2001" name="Science">
        <title>Comparative genomics of Listeria species.</title>
        <authorList>
            <person name="Glaser P."/>
            <person name="Frangeul L."/>
            <person name="Buchrieser C."/>
            <person name="Rusniok C."/>
            <person name="Amend A."/>
            <person name="Baquero F."/>
            <person name="Berche P."/>
            <person name="Bloecker H."/>
            <person name="Brandt P."/>
            <person name="Chakraborty T."/>
            <person name="Charbit A."/>
            <person name="Chetouani F."/>
            <person name="Couve E."/>
            <person name="de Daruvar A."/>
            <person name="Dehoux P."/>
            <person name="Domann E."/>
            <person name="Dominguez-Bernal G."/>
            <person name="Duchaud E."/>
            <person name="Durant L."/>
            <person name="Dussurget O."/>
            <person name="Entian K.-D."/>
            <person name="Fsihi H."/>
            <person name="Garcia-del Portillo F."/>
            <person name="Garrido P."/>
            <person name="Gautier L."/>
            <person name="Goebel W."/>
            <person name="Gomez-Lopez N."/>
            <person name="Hain T."/>
            <person name="Hauf J."/>
            <person name="Jackson D."/>
            <person name="Jones L.-M."/>
            <person name="Kaerst U."/>
            <person name="Kreft J."/>
            <person name="Kuhn M."/>
            <person name="Kunst F."/>
            <person name="Kurapkat G."/>
            <person name="Madueno E."/>
            <person name="Maitournam A."/>
            <person name="Mata Vicente J."/>
            <person name="Ng E."/>
            <person name="Nedjari H."/>
            <person name="Nordsiek G."/>
            <person name="Novella S."/>
            <person name="de Pablos B."/>
            <person name="Perez-Diaz J.-C."/>
            <person name="Purcell R."/>
            <person name="Remmel B."/>
            <person name="Rose M."/>
            <person name="Schlueter T."/>
            <person name="Simoes N."/>
            <person name="Tierrez A."/>
            <person name="Vazquez-Boland J.-A."/>
            <person name="Voss H."/>
            <person name="Wehland J."/>
            <person name="Cossart P."/>
        </authorList>
    </citation>
    <scope>NUCLEOTIDE SEQUENCE [LARGE SCALE GENOMIC DNA]</scope>
    <source>
        <strain>ATCC BAA-680 / CLIP 11262</strain>
    </source>
</reference>
<evidence type="ECO:0000255" key="1">
    <source>
        <dbReference type="HAMAP-Rule" id="MF_00734"/>
    </source>
</evidence>
<organism>
    <name type="scientific">Listeria innocua serovar 6a (strain ATCC BAA-680 / CLIP 11262)</name>
    <dbReference type="NCBI Taxonomy" id="272626"/>
    <lineage>
        <taxon>Bacteria</taxon>
        <taxon>Bacillati</taxon>
        <taxon>Bacillota</taxon>
        <taxon>Bacilli</taxon>
        <taxon>Bacillales</taxon>
        <taxon>Listeriaceae</taxon>
        <taxon>Listeria</taxon>
    </lineage>
</organism>
<protein>
    <recommendedName>
        <fullName evidence="1">Tagatose 1,6-diphosphate aldolase</fullName>
        <ecNumber evidence="1">4.1.2.40</ecNumber>
    </recommendedName>
    <alternativeName>
        <fullName evidence="1">D-tagatose-1,6-bisphosphate aldolase</fullName>
    </alternativeName>
    <alternativeName>
        <fullName evidence="1">Tagatose-bisphosphate aldolase</fullName>
    </alternativeName>
</protein>
<sequence>MVQITKGKFDGLQRLSNDKGVIAALAIDQRGSLKKMIQQAKGTENKKDVEDFKQLVSEELTPYASAILLDLEYGTPAIKARHEGSGLLTSYEKTGYDATTPGKLPDLIEDLSALRIKENGGDAVKILVYYDPDEPAEINEIKYAFLERIGAECRAVDIPFFLEPITYDAKVTDSGSLEYAKLKPAKVKASIKEFSKPRYGVDVLKLEVPVNFKYVEGFAEGEVAYTQDEAARHFEECSDLSPLPFIYLSAGVTSEMFHKTIQFANQHNVQYSGVLCGRATWADGIEVYGKQGDDALREWLRTQGKENITSLDKLLDEGAVPWWTKYGSFEDVHVVEKQ</sequence>
<accession>Q92EB7</accession>
<feature type="chain" id="PRO_0000203941" description="Tagatose 1,6-diphosphate aldolase">
    <location>
        <begin position="1"/>
        <end position="338"/>
    </location>
</feature>
<gene>
    <name evidence="1" type="primary">lacD</name>
    <name type="ordered locus">lin0543</name>
</gene>
<dbReference type="EC" id="4.1.2.40" evidence="1"/>
<dbReference type="EMBL" id="AL596165">
    <property type="protein sequence ID" value="CAC95775.1"/>
    <property type="molecule type" value="Genomic_DNA"/>
</dbReference>
<dbReference type="PIR" id="AG1500">
    <property type="entry name" value="AG1500"/>
</dbReference>
<dbReference type="RefSeq" id="WP_003770662.1">
    <property type="nucleotide sequence ID" value="NC_003212.1"/>
</dbReference>
<dbReference type="SMR" id="Q92EB7"/>
<dbReference type="STRING" id="272626.gene:17564869"/>
<dbReference type="KEGG" id="lin:lin0543"/>
<dbReference type="eggNOG" id="COG3684">
    <property type="taxonomic scope" value="Bacteria"/>
</dbReference>
<dbReference type="HOGENOM" id="CLU_058971_0_1_9"/>
<dbReference type="OrthoDB" id="106309at2"/>
<dbReference type="UniPathway" id="UPA00704">
    <property type="reaction ID" value="UER00716"/>
</dbReference>
<dbReference type="Proteomes" id="UP000002513">
    <property type="component" value="Chromosome"/>
</dbReference>
<dbReference type="GO" id="GO:0061595">
    <property type="term" value="F:6-deoxy-6-sulfofructose-1-phosphate aldolase activity"/>
    <property type="evidence" value="ECO:0007669"/>
    <property type="project" value="TreeGrafter"/>
</dbReference>
<dbReference type="GO" id="GO:0009024">
    <property type="term" value="F:tagatose-6-phosphate kinase activity"/>
    <property type="evidence" value="ECO:0007669"/>
    <property type="project" value="InterPro"/>
</dbReference>
<dbReference type="GO" id="GO:0009025">
    <property type="term" value="F:tagatose-bisphosphate aldolase activity"/>
    <property type="evidence" value="ECO:0007669"/>
    <property type="project" value="UniProtKB-UniRule"/>
</dbReference>
<dbReference type="GO" id="GO:1902777">
    <property type="term" value="P:6-sulfoquinovose(1-) catabolic process"/>
    <property type="evidence" value="ECO:0007669"/>
    <property type="project" value="TreeGrafter"/>
</dbReference>
<dbReference type="GO" id="GO:2001059">
    <property type="term" value="P:D-tagatose 6-phosphate catabolic process"/>
    <property type="evidence" value="ECO:0007669"/>
    <property type="project" value="UniProtKB-UniRule"/>
</dbReference>
<dbReference type="GO" id="GO:0019512">
    <property type="term" value="P:lactose catabolic process via tagatose-6-phosphate"/>
    <property type="evidence" value="ECO:0007669"/>
    <property type="project" value="InterPro"/>
</dbReference>
<dbReference type="FunFam" id="3.20.20.70:FF:000137">
    <property type="entry name" value="Tagatose 1,6-diphosphate aldolase 2"/>
    <property type="match status" value="1"/>
</dbReference>
<dbReference type="Gene3D" id="3.20.20.70">
    <property type="entry name" value="Aldolase class I"/>
    <property type="match status" value="1"/>
</dbReference>
<dbReference type="HAMAP" id="MF_00734">
    <property type="entry name" value="LacD"/>
    <property type="match status" value="1"/>
</dbReference>
<dbReference type="InterPro" id="IPR013785">
    <property type="entry name" value="Aldolase_TIM"/>
</dbReference>
<dbReference type="InterPro" id="IPR002915">
    <property type="entry name" value="DeoC/FbaB/LacD_aldolase"/>
</dbReference>
<dbReference type="InterPro" id="IPR050552">
    <property type="entry name" value="LacD_aldolase"/>
</dbReference>
<dbReference type="InterPro" id="IPR005927">
    <property type="entry name" value="Tag_1.6-dipho_adolase"/>
</dbReference>
<dbReference type="NCBIfam" id="NF009065">
    <property type="entry name" value="PRK12399.1"/>
    <property type="match status" value="1"/>
</dbReference>
<dbReference type="NCBIfam" id="NF009498">
    <property type="entry name" value="PRK12858.1"/>
    <property type="match status" value="1"/>
</dbReference>
<dbReference type="PANTHER" id="PTHR39340">
    <property type="entry name" value="SULFOFRUCTOSEPHOSPHATE ALDOLASE"/>
    <property type="match status" value="1"/>
</dbReference>
<dbReference type="PANTHER" id="PTHR39340:SF1">
    <property type="entry name" value="SULFOFRUCTOSEPHOSPHATE ALDOLASE"/>
    <property type="match status" value="1"/>
</dbReference>
<dbReference type="Pfam" id="PF01791">
    <property type="entry name" value="DeoC"/>
    <property type="match status" value="1"/>
</dbReference>
<dbReference type="SMART" id="SM01133">
    <property type="entry name" value="DeoC"/>
    <property type="match status" value="1"/>
</dbReference>
<dbReference type="SUPFAM" id="SSF51569">
    <property type="entry name" value="Aldolase"/>
    <property type="match status" value="1"/>
</dbReference>
<name>LACD_LISIN</name>
<proteinExistence type="inferred from homology"/>
<keyword id="KW-0423">Lactose metabolism</keyword>
<keyword id="KW-0456">Lyase</keyword>